<keyword id="KW-0031">Aminopeptidase</keyword>
<keyword id="KW-0963">Cytoplasm</keyword>
<keyword id="KW-0378">Hydrolase</keyword>
<keyword id="KW-0464">Manganese</keyword>
<keyword id="KW-0479">Metal-binding</keyword>
<keyword id="KW-0645">Protease</keyword>
<evidence type="ECO:0000255" key="1">
    <source>
        <dbReference type="HAMAP-Rule" id="MF_00181"/>
    </source>
</evidence>
<sequence>MKQIQFKLNATTDLQSFDTLILPVFDQGQSTQLAKEAHLQELTQTLFNQGDFLAKPGQTQMLFQPAKIDCARLLLVGMGDPKTLTVKGYLESLNAAAKALDNSGAVNVLNTLIECIPAKNDQAWAIYQNTLAFQRSLYDYEHESRNKKTPKEPKLNSMTYAAEATAENEKAVNQAQASALGMALTQDLANMPSNYCTPTYLAETAEAMAKTYGFDVNILEQDEMIKMGMGSFMAVAQGAHTPPKMICLSYQGADASEAPIALVGKGVTFDTGGISLKPGEAMDEMKYDMGGAATVLGVFEALGRLKPKLNVVAVIPSTENMPAGNAIKPGDVVKSLSGQTIEILNTDAEGRLILCDALTYTQQTYKPSKIVDMATLTGACIIALGHQMSAVLGNDQSLVDALVASGQKTYDRFWQMPLSEEYDEQLKSNFADMANIGGRAAGTITAAQFLARFTKEVNWAHLDIAGTAWISGKDKGATGRPVPALVDFLLEQI</sequence>
<comment type="function">
    <text evidence="1">Presumably involved in the processing and regular turnover of intracellular proteins. Catalyzes the removal of unsubstituted N-terminal amino acids from various peptides.</text>
</comment>
<comment type="catalytic activity">
    <reaction evidence="1">
        <text>Release of an N-terminal amino acid, Xaa-|-Yaa-, in which Xaa is preferably Leu, but may be other amino acids including Pro although not Arg or Lys, and Yaa may be Pro. Amino acid amides and methyl esters are also readily hydrolyzed, but rates on arylamides are exceedingly low.</text>
        <dbReference type="EC" id="3.4.11.1"/>
    </reaction>
</comment>
<comment type="catalytic activity">
    <reaction evidence="1">
        <text>Release of an N-terminal amino acid, preferentially leucine, but not glutamic or aspartic acids.</text>
        <dbReference type="EC" id="3.4.11.10"/>
    </reaction>
</comment>
<comment type="cofactor">
    <cofactor evidence="1">
        <name>Mn(2+)</name>
        <dbReference type="ChEBI" id="CHEBI:29035"/>
    </cofactor>
    <text evidence="1">Binds 2 manganese ions per subunit.</text>
</comment>
<comment type="subcellular location">
    <subcellularLocation>
        <location evidence="1">Cytoplasm</location>
    </subcellularLocation>
</comment>
<comment type="similarity">
    <text evidence="1">Belongs to the peptidase M17 family.</text>
</comment>
<proteinExistence type="inferred from homology"/>
<dbReference type="EC" id="3.4.11.1" evidence="1"/>
<dbReference type="EC" id="3.4.11.10" evidence="1"/>
<dbReference type="EMBL" id="CP000109">
    <property type="protein sequence ID" value="ABB42340.1"/>
    <property type="molecule type" value="Genomic_DNA"/>
</dbReference>
<dbReference type="SMR" id="Q31ET3"/>
<dbReference type="STRING" id="317025.Tcr_1748"/>
<dbReference type="MEROPS" id="M17.003"/>
<dbReference type="KEGG" id="tcx:Tcr_1748"/>
<dbReference type="eggNOG" id="COG0260">
    <property type="taxonomic scope" value="Bacteria"/>
</dbReference>
<dbReference type="HOGENOM" id="CLU_013734_2_2_6"/>
<dbReference type="OrthoDB" id="9809354at2"/>
<dbReference type="GO" id="GO:0005737">
    <property type="term" value="C:cytoplasm"/>
    <property type="evidence" value="ECO:0007669"/>
    <property type="project" value="UniProtKB-SubCell"/>
</dbReference>
<dbReference type="GO" id="GO:0030145">
    <property type="term" value="F:manganese ion binding"/>
    <property type="evidence" value="ECO:0007669"/>
    <property type="project" value="UniProtKB-UniRule"/>
</dbReference>
<dbReference type="GO" id="GO:0070006">
    <property type="term" value="F:metalloaminopeptidase activity"/>
    <property type="evidence" value="ECO:0007669"/>
    <property type="project" value="InterPro"/>
</dbReference>
<dbReference type="GO" id="GO:0006508">
    <property type="term" value="P:proteolysis"/>
    <property type="evidence" value="ECO:0007669"/>
    <property type="project" value="UniProtKB-KW"/>
</dbReference>
<dbReference type="CDD" id="cd00433">
    <property type="entry name" value="Peptidase_M17"/>
    <property type="match status" value="1"/>
</dbReference>
<dbReference type="Gene3D" id="3.40.220.10">
    <property type="entry name" value="Leucine Aminopeptidase, subunit E, domain 1"/>
    <property type="match status" value="1"/>
</dbReference>
<dbReference type="Gene3D" id="3.40.630.10">
    <property type="entry name" value="Zn peptidases"/>
    <property type="match status" value="1"/>
</dbReference>
<dbReference type="HAMAP" id="MF_00181">
    <property type="entry name" value="Cytosol_peptidase_M17"/>
    <property type="match status" value="1"/>
</dbReference>
<dbReference type="InterPro" id="IPR011356">
    <property type="entry name" value="Leucine_aapep/pepB"/>
</dbReference>
<dbReference type="InterPro" id="IPR043472">
    <property type="entry name" value="Macro_dom-like"/>
</dbReference>
<dbReference type="InterPro" id="IPR000819">
    <property type="entry name" value="Peptidase_M17_C"/>
</dbReference>
<dbReference type="InterPro" id="IPR023042">
    <property type="entry name" value="Peptidase_M17_leu_NH2_pept"/>
</dbReference>
<dbReference type="InterPro" id="IPR008283">
    <property type="entry name" value="Peptidase_M17_N"/>
</dbReference>
<dbReference type="NCBIfam" id="NF002073">
    <property type="entry name" value="PRK00913.1-2"/>
    <property type="match status" value="1"/>
</dbReference>
<dbReference type="NCBIfam" id="NF002074">
    <property type="entry name" value="PRK00913.1-4"/>
    <property type="match status" value="1"/>
</dbReference>
<dbReference type="NCBIfam" id="NF002077">
    <property type="entry name" value="PRK00913.2-4"/>
    <property type="match status" value="1"/>
</dbReference>
<dbReference type="PANTHER" id="PTHR11963:SF23">
    <property type="entry name" value="CYTOSOL AMINOPEPTIDASE"/>
    <property type="match status" value="1"/>
</dbReference>
<dbReference type="PANTHER" id="PTHR11963">
    <property type="entry name" value="LEUCINE AMINOPEPTIDASE-RELATED"/>
    <property type="match status" value="1"/>
</dbReference>
<dbReference type="Pfam" id="PF00883">
    <property type="entry name" value="Peptidase_M17"/>
    <property type="match status" value="1"/>
</dbReference>
<dbReference type="Pfam" id="PF02789">
    <property type="entry name" value="Peptidase_M17_N"/>
    <property type="match status" value="1"/>
</dbReference>
<dbReference type="PRINTS" id="PR00481">
    <property type="entry name" value="LAMNOPPTDASE"/>
</dbReference>
<dbReference type="SUPFAM" id="SSF52949">
    <property type="entry name" value="Macro domain-like"/>
    <property type="match status" value="1"/>
</dbReference>
<dbReference type="SUPFAM" id="SSF53187">
    <property type="entry name" value="Zn-dependent exopeptidases"/>
    <property type="match status" value="1"/>
</dbReference>
<dbReference type="PROSITE" id="PS00631">
    <property type="entry name" value="CYTOSOL_AP"/>
    <property type="match status" value="1"/>
</dbReference>
<accession>Q31ET3</accession>
<feature type="chain" id="PRO_1000058392" description="Probable cytosol aminopeptidase">
    <location>
        <begin position="1"/>
        <end position="493"/>
    </location>
</feature>
<feature type="active site" evidence="1">
    <location>
        <position position="277"/>
    </location>
</feature>
<feature type="active site" evidence="1">
    <location>
        <position position="351"/>
    </location>
</feature>
<feature type="binding site" evidence="1">
    <location>
        <position position="265"/>
    </location>
    <ligand>
        <name>Mn(2+)</name>
        <dbReference type="ChEBI" id="CHEBI:29035"/>
        <label>2</label>
    </ligand>
</feature>
<feature type="binding site" evidence="1">
    <location>
        <position position="270"/>
    </location>
    <ligand>
        <name>Mn(2+)</name>
        <dbReference type="ChEBI" id="CHEBI:29035"/>
        <label>1</label>
    </ligand>
</feature>
<feature type="binding site" evidence="1">
    <location>
        <position position="270"/>
    </location>
    <ligand>
        <name>Mn(2+)</name>
        <dbReference type="ChEBI" id="CHEBI:29035"/>
        <label>2</label>
    </ligand>
</feature>
<feature type="binding site" evidence="1">
    <location>
        <position position="288"/>
    </location>
    <ligand>
        <name>Mn(2+)</name>
        <dbReference type="ChEBI" id="CHEBI:29035"/>
        <label>2</label>
    </ligand>
</feature>
<feature type="binding site" evidence="1">
    <location>
        <position position="347"/>
    </location>
    <ligand>
        <name>Mn(2+)</name>
        <dbReference type="ChEBI" id="CHEBI:29035"/>
        <label>1</label>
    </ligand>
</feature>
<feature type="binding site" evidence="1">
    <location>
        <position position="349"/>
    </location>
    <ligand>
        <name>Mn(2+)</name>
        <dbReference type="ChEBI" id="CHEBI:29035"/>
        <label>1</label>
    </ligand>
</feature>
<feature type="binding site" evidence="1">
    <location>
        <position position="349"/>
    </location>
    <ligand>
        <name>Mn(2+)</name>
        <dbReference type="ChEBI" id="CHEBI:29035"/>
        <label>2</label>
    </ligand>
</feature>
<name>AMPA_HYDCU</name>
<organism>
    <name type="scientific">Hydrogenovibrio crunogenus (strain DSM 25203 / XCL-2)</name>
    <name type="common">Thiomicrospira crunogena</name>
    <dbReference type="NCBI Taxonomy" id="317025"/>
    <lineage>
        <taxon>Bacteria</taxon>
        <taxon>Pseudomonadati</taxon>
        <taxon>Pseudomonadota</taxon>
        <taxon>Gammaproteobacteria</taxon>
        <taxon>Thiotrichales</taxon>
        <taxon>Piscirickettsiaceae</taxon>
        <taxon>Hydrogenovibrio</taxon>
    </lineage>
</organism>
<protein>
    <recommendedName>
        <fullName evidence="1">Probable cytosol aminopeptidase</fullName>
        <ecNumber evidence="1">3.4.11.1</ecNumber>
    </recommendedName>
    <alternativeName>
        <fullName evidence="1">Leucine aminopeptidase</fullName>
        <shortName evidence="1">LAP</shortName>
        <ecNumber evidence="1">3.4.11.10</ecNumber>
    </alternativeName>
    <alternativeName>
        <fullName evidence="1">Leucyl aminopeptidase</fullName>
    </alternativeName>
</protein>
<reference key="1">
    <citation type="journal article" date="2006" name="PLoS Biol.">
        <title>The genome of deep-sea vent chemolithoautotroph Thiomicrospira crunogena XCL-2.</title>
        <authorList>
            <person name="Scott K.M."/>
            <person name="Sievert S.M."/>
            <person name="Abril F.N."/>
            <person name="Ball L.A."/>
            <person name="Barrett C.J."/>
            <person name="Blake R.A."/>
            <person name="Boller A.J."/>
            <person name="Chain P.S.G."/>
            <person name="Clark J.A."/>
            <person name="Davis C.R."/>
            <person name="Detter C."/>
            <person name="Do K.F."/>
            <person name="Dobrinski K.P."/>
            <person name="Faza B.I."/>
            <person name="Fitzpatrick K.A."/>
            <person name="Freyermuth S.K."/>
            <person name="Harmer T.L."/>
            <person name="Hauser L.J."/>
            <person name="Huegler M."/>
            <person name="Kerfeld C.A."/>
            <person name="Klotz M.G."/>
            <person name="Kong W.W."/>
            <person name="Land M."/>
            <person name="Lapidus A."/>
            <person name="Larimer F.W."/>
            <person name="Longo D.L."/>
            <person name="Lucas S."/>
            <person name="Malfatti S.A."/>
            <person name="Massey S.E."/>
            <person name="Martin D.D."/>
            <person name="McCuddin Z."/>
            <person name="Meyer F."/>
            <person name="Moore J.L."/>
            <person name="Ocampo L.H. Jr."/>
            <person name="Paul J.H."/>
            <person name="Paulsen I.T."/>
            <person name="Reep D.K."/>
            <person name="Ren Q."/>
            <person name="Ross R.L."/>
            <person name="Sato P.Y."/>
            <person name="Thomas P."/>
            <person name="Tinkham L.E."/>
            <person name="Zeruth G.T."/>
        </authorList>
    </citation>
    <scope>NUCLEOTIDE SEQUENCE [LARGE SCALE GENOMIC DNA]</scope>
    <source>
        <strain>DSM 25203 / XCL-2</strain>
    </source>
</reference>
<gene>
    <name evidence="1" type="primary">pepA</name>
    <name type="ordered locus">Tcr_1748</name>
</gene>